<accession>Q65EN1</accession>
<accession>Q62Q48</accession>
<reference key="1">
    <citation type="journal article" date="2004" name="J. Mol. Microbiol. Biotechnol.">
        <title>The complete genome sequence of Bacillus licheniformis DSM13, an organism with great industrial potential.</title>
        <authorList>
            <person name="Veith B."/>
            <person name="Herzberg C."/>
            <person name="Steckel S."/>
            <person name="Feesche J."/>
            <person name="Maurer K.H."/>
            <person name="Ehrenreich P."/>
            <person name="Baeumer S."/>
            <person name="Henne A."/>
            <person name="Liesegang H."/>
            <person name="Merkl R."/>
            <person name="Ehrenreich A."/>
            <person name="Gottschalk G."/>
        </authorList>
    </citation>
    <scope>NUCLEOTIDE SEQUENCE [LARGE SCALE GENOMIC DNA]</scope>
    <source>
        <strain>ATCC 14580 / DSM 13 / JCM 2505 / CCUG 7422 / NBRC 12200 / NCIMB 9375 / NCTC 10341 / NRRL NRS-1264 / Gibson 46</strain>
    </source>
</reference>
<reference key="2">
    <citation type="journal article" date="2004" name="Genome Biol.">
        <title>Complete genome sequence of the industrial bacterium Bacillus licheniformis and comparisons with closely related Bacillus species.</title>
        <authorList>
            <person name="Rey M.W."/>
            <person name="Ramaiya P."/>
            <person name="Nelson B.A."/>
            <person name="Brody-Karpin S.D."/>
            <person name="Zaretsky E.J."/>
            <person name="Tang M."/>
            <person name="Lopez de Leon A."/>
            <person name="Xiang H."/>
            <person name="Gusti V."/>
            <person name="Clausen I.G."/>
            <person name="Olsen P.B."/>
            <person name="Rasmussen M.D."/>
            <person name="Andersen J.T."/>
            <person name="Joergensen P.L."/>
            <person name="Larsen T.S."/>
            <person name="Sorokin A."/>
            <person name="Bolotin A."/>
            <person name="Lapidus A."/>
            <person name="Galleron N."/>
            <person name="Ehrlich S.D."/>
            <person name="Berka R.M."/>
        </authorList>
    </citation>
    <scope>NUCLEOTIDE SEQUENCE [LARGE SCALE GENOMIC DNA]</scope>
    <source>
        <strain>ATCC 14580 / DSM 13 / JCM 2505 / CCUG 7422 / NBRC 12200 / NCIMB 9375 / NCTC 10341 / NRRL NRS-1264 / Gibson 46</strain>
    </source>
</reference>
<proteinExistence type="inferred from homology"/>
<sequence length="511" mass="56564">MSNKLAALIILDGFGLRDETVGNAVAQAKKPNFDRYWNKYPHQTLTASGEAVGLPDGQMGNSEVGHLNIGAGRIVYQSLTRVNVAIREGEFEQNETFLAAMKHVKEKGTNLHLFGLLSDGGVHSHIHHLYALLKLAKKEGVENVYIHGFLDGRDVGPQTAEKYIKELQDQIEEIGVGEIATLSGRYYSMDRDKRWDRVEKAYRAMAYGEGPKYQNPLDVVKDSYENGIYDEFVIPSVITKENGEPVATIKDNDAVIFYNFRPDRAIQISNTFTNDDFRDFDRGDKHPKNLHFVCLTHFSETVDGYVAFKPVNLDNTVGEVLSQNGLKQLRIAETEKYPHVTFFMSGGREEKFPGEERILIDSPKVATYDLKPEMSAYEVKDALVKEIEAEKHNAIILNFANPDMVGHSGKVEPTVKAIEAVDECLGEVVDAILAKGGYAIITADHGNADVLITEEGKPHTAHTTNPVPVIVTKEGVTLREGGILGDLAPTLLDLLGVEKPKEMTGSSLIQK</sequence>
<comment type="function">
    <text evidence="1">Essential for rapid growth and for sporulation. Catalyzes the interconversion of 2-phosphoglycerate and 3-phosphoglycerate.</text>
</comment>
<comment type="catalytic activity">
    <reaction evidence="1">
        <text>(2R)-2-phosphoglycerate = (2R)-3-phosphoglycerate</text>
        <dbReference type="Rhea" id="RHEA:15901"/>
        <dbReference type="ChEBI" id="CHEBI:58272"/>
        <dbReference type="ChEBI" id="CHEBI:58289"/>
        <dbReference type="EC" id="5.4.2.12"/>
    </reaction>
</comment>
<comment type="cofactor">
    <cofactor evidence="1">
        <name>Mn(2+)</name>
        <dbReference type="ChEBI" id="CHEBI:29035"/>
    </cofactor>
    <text evidence="1">Binds 2 manganese ions per subunit.</text>
</comment>
<comment type="pathway">
    <text evidence="1">Carbohydrate degradation; glycolysis; pyruvate from D-glyceraldehyde 3-phosphate: step 3/5.</text>
</comment>
<comment type="subunit">
    <text evidence="1">Monomer.</text>
</comment>
<comment type="similarity">
    <text evidence="1">Belongs to the BPG-independent phosphoglycerate mutase family.</text>
</comment>
<dbReference type="EC" id="5.4.2.12" evidence="1"/>
<dbReference type="EMBL" id="AE017333">
    <property type="protein sequence ID" value="AAU42483.1"/>
    <property type="molecule type" value="Genomic_DNA"/>
</dbReference>
<dbReference type="EMBL" id="CP000002">
    <property type="protein sequence ID" value="AAU25112.1"/>
    <property type="molecule type" value="Genomic_DNA"/>
</dbReference>
<dbReference type="RefSeq" id="WP_003185462.1">
    <property type="nucleotide sequence ID" value="NC_006322.1"/>
</dbReference>
<dbReference type="SMR" id="Q65EN1"/>
<dbReference type="STRING" id="279010.BL03467"/>
<dbReference type="GeneID" id="92859758"/>
<dbReference type="KEGG" id="bld:BLi03662"/>
<dbReference type="KEGG" id="bli:BL03467"/>
<dbReference type="eggNOG" id="COG0696">
    <property type="taxonomic scope" value="Bacteria"/>
</dbReference>
<dbReference type="HOGENOM" id="CLU_026099_2_0_9"/>
<dbReference type="UniPathway" id="UPA00109">
    <property type="reaction ID" value="UER00186"/>
</dbReference>
<dbReference type="Proteomes" id="UP000000606">
    <property type="component" value="Chromosome"/>
</dbReference>
<dbReference type="GO" id="GO:0005829">
    <property type="term" value="C:cytosol"/>
    <property type="evidence" value="ECO:0007669"/>
    <property type="project" value="TreeGrafter"/>
</dbReference>
<dbReference type="GO" id="GO:0030145">
    <property type="term" value="F:manganese ion binding"/>
    <property type="evidence" value="ECO:0007669"/>
    <property type="project" value="UniProtKB-UniRule"/>
</dbReference>
<dbReference type="GO" id="GO:0004619">
    <property type="term" value="F:phosphoglycerate mutase activity"/>
    <property type="evidence" value="ECO:0007669"/>
    <property type="project" value="UniProtKB-EC"/>
</dbReference>
<dbReference type="GO" id="GO:0006007">
    <property type="term" value="P:glucose catabolic process"/>
    <property type="evidence" value="ECO:0007669"/>
    <property type="project" value="InterPro"/>
</dbReference>
<dbReference type="GO" id="GO:0006096">
    <property type="term" value="P:glycolytic process"/>
    <property type="evidence" value="ECO:0007669"/>
    <property type="project" value="UniProtKB-UniRule"/>
</dbReference>
<dbReference type="GO" id="GO:0030435">
    <property type="term" value="P:sporulation resulting in formation of a cellular spore"/>
    <property type="evidence" value="ECO:0007669"/>
    <property type="project" value="UniProtKB-KW"/>
</dbReference>
<dbReference type="CDD" id="cd16010">
    <property type="entry name" value="iPGM"/>
    <property type="match status" value="1"/>
</dbReference>
<dbReference type="FunFam" id="3.40.1450.10:FF:000001">
    <property type="entry name" value="2,3-bisphosphoglycerate-independent phosphoglycerate mutase"/>
    <property type="match status" value="1"/>
</dbReference>
<dbReference type="FunFam" id="3.40.720.10:FF:000001">
    <property type="entry name" value="2,3-bisphosphoglycerate-independent phosphoglycerate mutase"/>
    <property type="match status" value="1"/>
</dbReference>
<dbReference type="Gene3D" id="3.40.720.10">
    <property type="entry name" value="Alkaline Phosphatase, subunit A"/>
    <property type="match status" value="1"/>
</dbReference>
<dbReference type="Gene3D" id="3.40.1450.10">
    <property type="entry name" value="BPG-independent phosphoglycerate mutase, domain B"/>
    <property type="match status" value="1"/>
</dbReference>
<dbReference type="HAMAP" id="MF_01038">
    <property type="entry name" value="GpmI"/>
    <property type="match status" value="1"/>
</dbReference>
<dbReference type="InterPro" id="IPR017850">
    <property type="entry name" value="Alkaline_phosphatase_core_sf"/>
</dbReference>
<dbReference type="InterPro" id="IPR011258">
    <property type="entry name" value="BPG-indep_PGM_N"/>
</dbReference>
<dbReference type="InterPro" id="IPR006124">
    <property type="entry name" value="Metalloenzyme"/>
</dbReference>
<dbReference type="InterPro" id="IPR036646">
    <property type="entry name" value="PGAM_B_sf"/>
</dbReference>
<dbReference type="InterPro" id="IPR005995">
    <property type="entry name" value="Pgm_bpd_ind"/>
</dbReference>
<dbReference type="NCBIfam" id="TIGR01307">
    <property type="entry name" value="pgm_bpd_ind"/>
    <property type="match status" value="1"/>
</dbReference>
<dbReference type="PANTHER" id="PTHR31637">
    <property type="entry name" value="2,3-BISPHOSPHOGLYCERATE-INDEPENDENT PHOSPHOGLYCERATE MUTASE"/>
    <property type="match status" value="1"/>
</dbReference>
<dbReference type="PANTHER" id="PTHR31637:SF0">
    <property type="entry name" value="2,3-BISPHOSPHOGLYCERATE-INDEPENDENT PHOSPHOGLYCERATE MUTASE"/>
    <property type="match status" value="1"/>
</dbReference>
<dbReference type="Pfam" id="PF06415">
    <property type="entry name" value="iPGM_N"/>
    <property type="match status" value="1"/>
</dbReference>
<dbReference type="Pfam" id="PF01676">
    <property type="entry name" value="Metalloenzyme"/>
    <property type="match status" value="1"/>
</dbReference>
<dbReference type="PIRSF" id="PIRSF001492">
    <property type="entry name" value="IPGAM"/>
    <property type="match status" value="1"/>
</dbReference>
<dbReference type="SUPFAM" id="SSF64158">
    <property type="entry name" value="2,3-Bisphosphoglycerate-independent phosphoglycerate mutase, substrate-binding domain"/>
    <property type="match status" value="1"/>
</dbReference>
<dbReference type="SUPFAM" id="SSF53649">
    <property type="entry name" value="Alkaline phosphatase-like"/>
    <property type="match status" value="1"/>
</dbReference>
<organism>
    <name type="scientific">Bacillus licheniformis (strain ATCC 14580 / DSM 13 / JCM 2505 / CCUG 7422 / NBRC 12200 / NCIMB 9375 / NCTC 10341 / NRRL NRS-1264 / Gibson 46)</name>
    <dbReference type="NCBI Taxonomy" id="279010"/>
    <lineage>
        <taxon>Bacteria</taxon>
        <taxon>Bacillati</taxon>
        <taxon>Bacillota</taxon>
        <taxon>Bacilli</taxon>
        <taxon>Bacillales</taxon>
        <taxon>Bacillaceae</taxon>
        <taxon>Bacillus</taxon>
    </lineage>
</organism>
<keyword id="KW-0324">Glycolysis</keyword>
<keyword id="KW-0413">Isomerase</keyword>
<keyword id="KW-0464">Manganese</keyword>
<keyword id="KW-0479">Metal-binding</keyword>
<keyword id="KW-0597">Phosphoprotein</keyword>
<keyword id="KW-1185">Reference proteome</keyword>
<keyword id="KW-0749">Sporulation</keyword>
<feature type="chain" id="PRO_0000212125" description="2,3-bisphosphoglycerate-independent phosphoglycerate mutase">
    <location>
        <begin position="1"/>
        <end position="511"/>
    </location>
</feature>
<feature type="active site" description="Phosphoserine intermediate" evidence="1">
    <location>
        <position position="62"/>
    </location>
</feature>
<feature type="binding site" evidence="1">
    <location>
        <position position="12"/>
    </location>
    <ligand>
        <name>Mn(2+)</name>
        <dbReference type="ChEBI" id="CHEBI:29035"/>
        <label>2</label>
    </ligand>
</feature>
<feature type="binding site" evidence="1">
    <location>
        <position position="62"/>
    </location>
    <ligand>
        <name>Mn(2+)</name>
        <dbReference type="ChEBI" id="CHEBI:29035"/>
        <label>2</label>
    </ligand>
</feature>
<feature type="binding site" evidence="1">
    <location>
        <position position="123"/>
    </location>
    <ligand>
        <name>substrate</name>
    </ligand>
</feature>
<feature type="binding site" evidence="1">
    <location>
        <begin position="153"/>
        <end position="154"/>
    </location>
    <ligand>
        <name>substrate</name>
    </ligand>
</feature>
<feature type="binding site" evidence="1">
    <location>
        <position position="185"/>
    </location>
    <ligand>
        <name>substrate</name>
    </ligand>
</feature>
<feature type="binding site" evidence="1">
    <location>
        <position position="191"/>
    </location>
    <ligand>
        <name>substrate</name>
    </ligand>
</feature>
<feature type="binding site" evidence="1">
    <location>
        <begin position="261"/>
        <end position="264"/>
    </location>
    <ligand>
        <name>substrate</name>
    </ligand>
</feature>
<feature type="binding site" evidence="1">
    <location>
        <position position="336"/>
    </location>
    <ligand>
        <name>substrate</name>
    </ligand>
</feature>
<feature type="binding site" evidence="1">
    <location>
        <position position="403"/>
    </location>
    <ligand>
        <name>Mn(2+)</name>
        <dbReference type="ChEBI" id="CHEBI:29035"/>
        <label>1</label>
    </ligand>
</feature>
<feature type="binding site" evidence="1">
    <location>
        <position position="407"/>
    </location>
    <ligand>
        <name>Mn(2+)</name>
        <dbReference type="ChEBI" id="CHEBI:29035"/>
        <label>1</label>
    </ligand>
</feature>
<feature type="binding site" evidence="1">
    <location>
        <position position="444"/>
    </location>
    <ligand>
        <name>Mn(2+)</name>
        <dbReference type="ChEBI" id="CHEBI:29035"/>
        <label>2</label>
    </ligand>
</feature>
<feature type="binding site" evidence="1">
    <location>
        <position position="445"/>
    </location>
    <ligand>
        <name>Mn(2+)</name>
        <dbReference type="ChEBI" id="CHEBI:29035"/>
        <label>2</label>
    </ligand>
</feature>
<feature type="binding site" evidence="1">
    <location>
        <position position="462"/>
    </location>
    <ligand>
        <name>Mn(2+)</name>
        <dbReference type="ChEBI" id="CHEBI:29035"/>
        <label>1</label>
    </ligand>
</feature>
<feature type="modified residue" description="Phosphotyrosine" evidence="1">
    <location>
        <position position="36"/>
    </location>
</feature>
<evidence type="ECO:0000255" key="1">
    <source>
        <dbReference type="HAMAP-Rule" id="MF_01038"/>
    </source>
</evidence>
<protein>
    <recommendedName>
        <fullName evidence="1">2,3-bisphosphoglycerate-independent phosphoglycerate mutase</fullName>
        <shortName evidence="1">BPG-independent PGAM</shortName>
        <shortName evidence="1">Phosphoglyceromutase</shortName>
        <shortName evidence="1">iPGM</shortName>
        <ecNumber evidence="1">5.4.2.12</ecNumber>
    </recommendedName>
</protein>
<name>GPMI_BACLD</name>
<gene>
    <name evidence="1" type="primary">gpmI</name>
    <name type="synonym">pgm</name>
    <name type="ordered locus">BLi03662</name>
    <name type="ordered locus">BL03467</name>
</gene>